<proteinExistence type="evidence at protein level"/>
<feature type="chain" id="PRO_0000264251" description="BPTF-associated chromatin complex component 1">
    <location>
        <begin position="1"/>
        <end position="172"/>
    </location>
</feature>
<feature type="domain" description="SANT">
    <location>
        <begin position="38"/>
        <end position="86"/>
    </location>
</feature>
<feature type="region of interest" description="Disordered" evidence="2">
    <location>
        <begin position="87"/>
        <end position="172"/>
    </location>
</feature>
<feature type="compositionally biased region" description="Pro residues" evidence="2">
    <location>
        <begin position="110"/>
        <end position="119"/>
    </location>
</feature>
<feature type="compositionally biased region" description="Low complexity" evidence="2">
    <location>
        <begin position="120"/>
        <end position="130"/>
    </location>
</feature>
<feature type="modified residue" description="Phosphoserine" evidence="1">
    <location>
        <position position="96"/>
    </location>
</feature>
<feature type="splice variant" id="VSP_043754" description="In isoform 2." evidence="5">
    <location>
        <begin position="40"/>
        <end position="73"/>
    </location>
</feature>
<feature type="splice variant" id="VSP_047095" description="In isoform 3." evidence="6">
    <original>A</original>
    <variation>DSLTLDSGLLMTSADPPLLSC</variation>
    <location>
        <position position="172"/>
    </location>
</feature>
<keyword id="KW-0025">Alternative splicing</keyword>
<keyword id="KW-0156">Chromatin regulator</keyword>
<keyword id="KW-0238">DNA-binding</keyword>
<keyword id="KW-0539">Nucleus</keyword>
<keyword id="KW-0597">Phosphoprotein</keyword>
<keyword id="KW-1267">Proteomics identification</keyword>
<keyword id="KW-1185">Reference proteome</keyword>
<evidence type="ECO:0000250" key="1">
    <source>
        <dbReference type="UniProtKB" id="Q9DCT6"/>
    </source>
</evidence>
<evidence type="ECO:0000256" key="2">
    <source>
        <dbReference type="SAM" id="MobiDB-lite"/>
    </source>
</evidence>
<evidence type="ECO:0000269" key="3">
    <source>
    </source>
</evidence>
<evidence type="ECO:0000269" key="4">
    <source>
    </source>
</evidence>
<evidence type="ECO:0000303" key="5">
    <source>
    </source>
</evidence>
<evidence type="ECO:0000305" key="6"/>
<evidence type="ECO:0000312" key="7">
    <source>
        <dbReference type="HGNC" id="HGNC:28737"/>
    </source>
</evidence>
<reference key="1">
    <citation type="journal article" date="2004" name="Nat. Biotechnol.">
        <title>Transcriptome characterization elucidates signaling networks that control human ES cell growth and differentiation.</title>
        <authorList>
            <person name="Brandenberger R."/>
            <person name="Wei H."/>
            <person name="Zhang S."/>
            <person name="Lei S."/>
            <person name="Murage J."/>
            <person name="Fisk G.J."/>
            <person name="Li Y."/>
            <person name="Xu C."/>
            <person name="Fang R."/>
            <person name="Guegler K."/>
            <person name="Rao M.S."/>
            <person name="Mandalam R."/>
            <person name="Lebkowski J."/>
            <person name="Stanton L.W."/>
        </authorList>
    </citation>
    <scope>NUCLEOTIDE SEQUENCE [LARGE SCALE MRNA] (ISOFORM 2)</scope>
</reference>
<reference key="2">
    <citation type="journal article" date="2004" name="Nat. Genet.">
        <title>Complete sequencing and characterization of 21,243 full-length human cDNAs.</title>
        <authorList>
            <person name="Ota T."/>
            <person name="Suzuki Y."/>
            <person name="Nishikawa T."/>
            <person name="Otsuki T."/>
            <person name="Sugiyama T."/>
            <person name="Irie R."/>
            <person name="Wakamatsu A."/>
            <person name="Hayashi K."/>
            <person name="Sato H."/>
            <person name="Nagai K."/>
            <person name="Kimura K."/>
            <person name="Makita H."/>
            <person name="Sekine M."/>
            <person name="Obayashi M."/>
            <person name="Nishi T."/>
            <person name="Shibahara T."/>
            <person name="Tanaka T."/>
            <person name="Ishii S."/>
            <person name="Yamamoto J."/>
            <person name="Saito K."/>
            <person name="Kawai Y."/>
            <person name="Isono Y."/>
            <person name="Nakamura Y."/>
            <person name="Nagahari K."/>
            <person name="Murakami K."/>
            <person name="Yasuda T."/>
            <person name="Iwayanagi T."/>
            <person name="Wagatsuma M."/>
            <person name="Shiratori A."/>
            <person name="Sudo H."/>
            <person name="Hosoiri T."/>
            <person name="Kaku Y."/>
            <person name="Kodaira H."/>
            <person name="Kondo H."/>
            <person name="Sugawara M."/>
            <person name="Takahashi M."/>
            <person name="Kanda K."/>
            <person name="Yokoi T."/>
            <person name="Furuya T."/>
            <person name="Kikkawa E."/>
            <person name="Omura Y."/>
            <person name="Abe K."/>
            <person name="Kamihara K."/>
            <person name="Katsuta N."/>
            <person name="Sato K."/>
            <person name="Tanikawa M."/>
            <person name="Yamazaki M."/>
            <person name="Ninomiya K."/>
            <person name="Ishibashi T."/>
            <person name="Yamashita H."/>
            <person name="Murakawa K."/>
            <person name="Fujimori K."/>
            <person name="Tanai H."/>
            <person name="Kimata M."/>
            <person name="Watanabe M."/>
            <person name="Hiraoka S."/>
            <person name="Chiba Y."/>
            <person name="Ishida S."/>
            <person name="Ono Y."/>
            <person name="Takiguchi S."/>
            <person name="Watanabe S."/>
            <person name="Yosida M."/>
            <person name="Hotuta T."/>
            <person name="Kusano J."/>
            <person name="Kanehori K."/>
            <person name="Takahashi-Fujii A."/>
            <person name="Hara H."/>
            <person name="Tanase T.-O."/>
            <person name="Nomura Y."/>
            <person name="Togiya S."/>
            <person name="Komai F."/>
            <person name="Hara R."/>
            <person name="Takeuchi K."/>
            <person name="Arita M."/>
            <person name="Imose N."/>
            <person name="Musashino K."/>
            <person name="Yuuki H."/>
            <person name="Oshima A."/>
            <person name="Sasaki N."/>
            <person name="Aotsuka S."/>
            <person name="Yoshikawa Y."/>
            <person name="Matsunawa H."/>
            <person name="Ichihara T."/>
            <person name="Shiohata N."/>
            <person name="Sano S."/>
            <person name="Moriya S."/>
            <person name="Momiyama H."/>
            <person name="Satoh N."/>
            <person name="Takami S."/>
            <person name="Terashima Y."/>
            <person name="Suzuki O."/>
            <person name="Nakagawa S."/>
            <person name="Senoh A."/>
            <person name="Mizoguchi H."/>
            <person name="Goto Y."/>
            <person name="Shimizu F."/>
            <person name="Wakebe H."/>
            <person name="Hishigaki H."/>
            <person name="Watanabe T."/>
            <person name="Sugiyama A."/>
            <person name="Takemoto M."/>
            <person name="Kawakami B."/>
            <person name="Yamazaki M."/>
            <person name="Watanabe K."/>
            <person name="Kumagai A."/>
            <person name="Itakura S."/>
            <person name="Fukuzumi Y."/>
            <person name="Fujimori Y."/>
            <person name="Komiyama M."/>
            <person name="Tashiro H."/>
            <person name="Tanigami A."/>
            <person name="Fujiwara T."/>
            <person name="Ono T."/>
            <person name="Yamada K."/>
            <person name="Fujii Y."/>
            <person name="Ozaki K."/>
            <person name="Hirao M."/>
            <person name="Ohmori Y."/>
            <person name="Kawabata A."/>
            <person name="Hikiji T."/>
            <person name="Kobatake N."/>
            <person name="Inagaki H."/>
            <person name="Ikema Y."/>
            <person name="Okamoto S."/>
            <person name="Okitani R."/>
            <person name="Kawakami T."/>
            <person name="Noguchi S."/>
            <person name="Itoh T."/>
            <person name="Shigeta K."/>
            <person name="Senba T."/>
            <person name="Matsumura K."/>
            <person name="Nakajima Y."/>
            <person name="Mizuno T."/>
            <person name="Morinaga M."/>
            <person name="Sasaki M."/>
            <person name="Togashi T."/>
            <person name="Oyama M."/>
            <person name="Hata H."/>
            <person name="Watanabe M."/>
            <person name="Komatsu T."/>
            <person name="Mizushima-Sugano J."/>
            <person name="Satoh T."/>
            <person name="Shirai Y."/>
            <person name="Takahashi Y."/>
            <person name="Nakagawa K."/>
            <person name="Okumura K."/>
            <person name="Nagase T."/>
            <person name="Nomura N."/>
            <person name="Kikuchi H."/>
            <person name="Masuho Y."/>
            <person name="Yamashita R."/>
            <person name="Nakai K."/>
            <person name="Yada T."/>
            <person name="Nakamura Y."/>
            <person name="Ohara O."/>
            <person name="Isogai T."/>
            <person name="Sugano S."/>
        </authorList>
    </citation>
    <scope>NUCLEOTIDE SEQUENCE [LARGE SCALE MRNA] (ISOFORM 1)</scope>
    <source>
        <tissue>Hippocampus</tissue>
    </source>
</reference>
<reference key="3">
    <citation type="journal article" date="2006" name="Nature">
        <title>DNA sequence of human chromosome 17 and analysis of rearrangement in the human lineage.</title>
        <authorList>
            <person name="Zody M.C."/>
            <person name="Garber M."/>
            <person name="Adams D.J."/>
            <person name="Sharpe T."/>
            <person name="Harrow J."/>
            <person name="Lupski J.R."/>
            <person name="Nicholson C."/>
            <person name="Searle S.M."/>
            <person name="Wilming L."/>
            <person name="Young S.K."/>
            <person name="Abouelleil A."/>
            <person name="Allen N.R."/>
            <person name="Bi W."/>
            <person name="Bloom T."/>
            <person name="Borowsky M.L."/>
            <person name="Bugalter B.E."/>
            <person name="Butler J."/>
            <person name="Chang J.L."/>
            <person name="Chen C.-K."/>
            <person name="Cook A."/>
            <person name="Corum B."/>
            <person name="Cuomo C.A."/>
            <person name="de Jong P.J."/>
            <person name="DeCaprio D."/>
            <person name="Dewar K."/>
            <person name="FitzGerald M."/>
            <person name="Gilbert J."/>
            <person name="Gibson R."/>
            <person name="Gnerre S."/>
            <person name="Goldstein S."/>
            <person name="Grafham D.V."/>
            <person name="Grocock R."/>
            <person name="Hafez N."/>
            <person name="Hagopian D.S."/>
            <person name="Hart E."/>
            <person name="Norman C.H."/>
            <person name="Humphray S."/>
            <person name="Jaffe D.B."/>
            <person name="Jones M."/>
            <person name="Kamal M."/>
            <person name="Khodiyar V.K."/>
            <person name="LaButti K."/>
            <person name="Laird G."/>
            <person name="Lehoczky J."/>
            <person name="Liu X."/>
            <person name="Lokyitsang T."/>
            <person name="Loveland J."/>
            <person name="Lui A."/>
            <person name="Macdonald P."/>
            <person name="Major J.E."/>
            <person name="Matthews L."/>
            <person name="Mauceli E."/>
            <person name="McCarroll S.A."/>
            <person name="Mihalev A.H."/>
            <person name="Mudge J."/>
            <person name="Nguyen C."/>
            <person name="Nicol R."/>
            <person name="O'Leary S.B."/>
            <person name="Osoegawa K."/>
            <person name="Schwartz D.C."/>
            <person name="Shaw-Smith C."/>
            <person name="Stankiewicz P."/>
            <person name="Steward C."/>
            <person name="Swarbreck D."/>
            <person name="Venkataraman V."/>
            <person name="Whittaker C.A."/>
            <person name="Yang X."/>
            <person name="Zimmer A.R."/>
            <person name="Bradley A."/>
            <person name="Hubbard T."/>
            <person name="Birren B.W."/>
            <person name="Rogers J."/>
            <person name="Lander E.S."/>
            <person name="Nusbaum C."/>
        </authorList>
    </citation>
    <scope>NUCLEOTIDE SEQUENCE [LARGE SCALE GENOMIC DNA]</scope>
</reference>
<reference key="4">
    <citation type="submission" date="2005-07" db="EMBL/GenBank/DDBJ databases">
        <authorList>
            <person name="Mural R.J."/>
            <person name="Istrail S."/>
            <person name="Sutton G.G."/>
            <person name="Florea L."/>
            <person name="Halpern A.L."/>
            <person name="Mobarry C.M."/>
            <person name="Lippert R."/>
            <person name="Walenz B."/>
            <person name="Shatkay H."/>
            <person name="Dew I."/>
            <person name="Miller J.R."/>
            <person name="Flanigan M.J."/>
            <person name="Edwards N.J."/>
            <person name="Bolanos R."/>
            <person name="Fasulo D."/>
            <person name="Halldorsson B.V."/>
            <person name="Hannenhalli S."/>
            <person name="Turner R."/>
            <person name="Yooseph S."/>
            <person name="Lu F."/>
            <person name="Nusskern D.R."/>
            <person name="Shue B.C."/>
            <person name="Zheng X.H."/>
            <person name="Zhong F."/>
            <person name="Delcher A.L."/>
            <person name="Huson D.H."/>
            <person name="Kravitz S.A."/>
            <person name="Mouchard L."/>
            <person name="Reinert K."/>
            <person name="Remington K.A."/>
            <person name="Clark A.G."/>
            <person name="Waterman M.S."/>
            <person name="Eichler E.E."/>
            <person name="Adams M.D."/>
            <person name="Hunkapiller M.W."/>
            <person name="Myers E.W."/>
            <person name="Venter J.C."/>
        </authorList>
    </citation>
    <scope>NUCLEOTIDE SEQUENCE [LARGE SCALE GENOMIC DNA]</scope>
</reference>
<reference key="5">
    <citation type="journal article" date="2004" name="Genome Res.">
        <title>The status, quality, and expansion of the NIH full-length cDNA project: the Mammalian Gene Collection (MGC).</title>
        <authorList>
            <consortium name="The MGC Project Team"/>
        </authorList>
    </citation>
    <scope>NUCLEOTIDE SEQUENCE [LARGE SCALE MRNA] (ISOFORM 1)</scope>
    <source>
        <tissue>Mammary gland</tissue>
        <tissue>Ovary</tissue>
    </source>
</reference>
<reference key="6">
    <citation type="journal article" date="2005" name="Cell">
        <title>Physical association and coordinate function of the H3 K4 methyltransferase MLL1 and the H4 K16 acetyltransferase MOF.</title>
        <authorList>
            <person name="Dou Y."/>
            <person name="Milne T.A."/>
            <person name="Tackett A.J."/>
            <person name="Smith E.R."/>
            <person name="Fukuda A."/>
            <person name="Wysocka J."/>
            <person name="Allis C.D."/>
            <person name="Chait B.T."/>
            <person name="Hess J.L."/>
            <person name="Roeder R.G."/>
        </authorList>
    </citation>
    <scope>IDENTIFICATION IN THE MLL1/MLL COMPLEX</scope>
</reference>
<reference key="7">
    <citation type="journal article" date="2010" name="Cell">
        <title>Quantitative interaction proteomics and genome-wide profiling of epigenetic histone marks and their readers.</title>
        <authorList>
            <person name="Vermeulen M."/>
            <person name="Eberl H.C."/>
            <person name="Matarese F."/>
            <person name="Marks H."/>
            <person name="Denissov S."/>
            <person name="Butter F."/>
            <person name="Lee K.K."/>
            <person name="Olsen J.V."/>
            <person name="Hyman A.A."/>
            <person name="Stunnenberg H.G."/>
            <person name="Mann M."/>
        </authorList>
    </citation>
    <scope>IDENTIFICATION IN THE NURF COMPLEX</scope>
</reference>
<protein>
    <recommendedName>
        <fullName evidence="7">BPTF-associated chromatin complex component 1</fullName>
    </recommendedName>
    <alternativeName>
        <fullName>BPTF-associated protein of 18 kDa</fullName>
    </alternativeName>
    <alternativeName>
        <fullName>Chromatin complexes subunit BAP18</fullName>
    </alternativeName>
</protein>
<sequence length="172" mass="17900">MTSASTKVGEIFSAAGAAFTKLGELTMQLHPVADSSPAGAKWTETEIEMLRAAVKRFGDDLNHISCVIKERTVAQIKATVKRKVYEDSGIPLPAESPKKGPKKVASGVLSPPPAAPPPSSSSVPEAGGPPIKKQKADVTLSALNDSDANSDVVDIEGLGETPPAKKLNFDQA</sequence>
<comment type="function">
    <text>Component of chromatin complexes such as the MLL1/MLL and NURF complexes.</text>
</comment>
<comment type="subunit">
    <text evidence="3 4">Component of some MLL1/MLL complex, at least composed of the core components KMT2A/MLL1, ASH2L, HCFC1/HCF1, WDR5 and RBBP5, as well as the facultative components BACC1, CHD8, E2F6, HSP70, INO80C, KANSL1, LAS1L, MAX, MCRS1, MGA, KAT8/MOF, PELP1, PHF20, PRP31, RING2, RUVB1/TIP49A, RUVB2/TIP49B, SENP3, TAF1, TAF4, TAF6, TAF7, TAF9 and TEX10. Component of the nucleosome-remodeling factor (NURF) complex.</text>
</comment>
<comment type="interaction">
    <interactant intactId="EBI-4280811">
        <id>Q8IXM2</id>
    </interactant>
    <interactant intactId="EBI-4280811">
        <id>Q8IXM2</id>
        <label>BAP18</label>
    </interactant>
    <organismsDiffer>false</organismsDiffer>
    <experiments>3</experiments>
</comment>
<comment type="interaction">
    <interactant intactId="EBI-4280811">
        <id>Q8IXM2</id>
    </interactant>
    <interactant intactId="EBI-744973">
        <id>Q9C005</id>
        <label>DPY30</label>
    </interactant>
    <organismsDiffer>false</organismsDiffer>
    <experiments>3</experiments>
</comment>
<comment type="interaction">
    <interactant intactId="EBI-4280811">
        <id>Q8IXM2</id>
    </interactant>
    <interactant intactId="EBI-747754">
        <id>P28799</id>
        <label>GRN</label>
    </interactant>
    <organismsDiffer>false</organismsDiffer>
    <experiments>3</experiments>
</comment>
<comment type="interaction">
    <interactant intactId="EBI-4280811">
        <id>Q8IXM2</id>
    </interactant>
    <interactant intactId="EBI-10975473">
        <id>O60333-2</id>
        <label>KIF1B</label>
    </interactant>
    <organismsDiffer>false</organismsDiffer>
    <experiments>3</experiments>
</comment>
<comment type="interaction">
    <interactant intactId="EBI-4280811">
        <id>Q8IXM2</id>
    </interactant>
    <interactant intactId="EBI-5651459">
        <id>P43357</id>
        <label>MAGEA3</label>
    </interactant>
    <organismsDiffer>false</organismsDiffer>
    <experiments>5</experiments>
</comment>
<comment type="interaction">
    <interactant intactId="EBI-4280811">
        <id>Q8IXM2</id>
    </interactant>
    <interactant intactId="EBI-475646">
        <id>P07196</id>
        <label>NEFL</label>
    </interactant>
    <organismsDiffer>false</organismsDiffer>
    <experiments>3</experiments>
</comment>
<comment type="interaction">
    <interactant intactId="EBI-4280811">
        <id>Q8IXM2</id>
    </interactant>
    <interactant intactId="EBI-396669">
        <id>Q9Y3C5</id>
        <label>RNF11</label>
    </interactant>
    <organismsDiffer>false</organismsDiffer>
    <experiments>3</experiments>
</comment>
<comment type="interaction">
    <interactant intactId="EBI-4280811">
        <id>Q8IXM2</id>
    </interactant>
    <interactant intactId="EBI-720609">
        <id>O76024</id>
        <label>WFS1</label>
    </interactant>
    <organismsDiffer>false</organismsDiffer>
    <experiments>3</experiments>
</comment>
<comment type="subcellular location">
    <subcellularLocation>
        <location evidence="6">Nucleus</location>
    </subcellularLocation>
</comment>
<comment type="alternative products">
    <event type="alternative splicing"/>
    <isoform>
        <id>Q8IXM2-1</id>
        <name>1</name>
        <sequence type="displayed"/>
    </isoform>
    <isoform>
        <id>Q8IXM2-2</id>
        <name>2</name>
        <sequence type="described" ref="VSP_043754"/>
    </isoform>
    <isoform>
        <id>Q8IXM2-3</id>
        <name>3</name>
        <sequence type="described" ref="VSP_047095"/>
    </isoform>
</comment>
<dbReference type="EMBL" id="CN280697">
    <property type="status" value="NOT_ANNOTATED_CDS"/>
    <property type="molecule type" value="mRNA"/>
</dbReference>
<dbReference type="EMBL" id="AK295795">
    <property type="protein sequence ID" value="BAG58615.1"/>
    <property type="molecule type" value="mRNA"/>
</dbReference>
<dbReference type="EMBL" id="AC040977">
    <property type="status" value="NOT_ANNOTATED_CDS"/>
    <property type="molecule type" value="Genomic_DNA"/>
</dbReference>
<dbReference type="EMBL" id="CH471108">
    <property type="protein sequence ID" value="EAW90278.1"/>
    <property type="molecule type" value="Genomic_DNA"/>
</dbReference>
<dbReference type="EMBL" id="BC040036">
    <property type="protein sequence ID" value="AAH40036.1"/>
    <property type="molecule type" value="mRNA"/>
</dbReference>
<dbReference type="EMBL" id="BC040148">
    <property type="protein sequence ID" value="AAH40148.1"/>
    <property type="molecule type" value="mRNA"/>
</dbReference>
<dbReference type="CCDS" id="CCDS32542.1">
    <molecule id="Q8IXM2-1"/>
</dbReference>
<dbReference type="CCDS" id="CCDS45595.1">
    <molecule id="Q8IXM2-3"/>
</dbReference>
<dbReference type="CCDS" id="CCDS45596.1">
    <molecule id="Q8IXM2-2"/>
</dbReference>
<dbReference type="RefSeq" id="NP_001136270.1">
    <molecule id="Q8IXM2-3"/>
    <property type="nucleotide sequence ID" value="NM_001142798.3"/>
</dbReference>
<dbReference type="RefSeq" id="NP_001136271.1">
    <molecule id="Q8IXM2-2"/>
    <property type="nucleotide sequence ID" value="NM_001142799.3"/>
</dbReference>
<dbReference type="RefSeq" id="NP_777553.1">
    <molecule id="Q8IXM2-1"/>
    <property type="nucleotide sequence ID" value="NM_174893.4"/>
</dbReference>
<dbReference type="SMR" id="Q8IXM2"/>
<dbReference type="BioGRID" id="125903">
    <property type="interactions" value="111"/>
</dbReference>
<dbReference type="CORUM" id="Q8IXM2"/>
<dbReference type="DIP" id="DIP-60552N"/>
<dbReference type="FunCoup" id="Q8IXM2">
    <property type="interactions" value="1622"/>
</dbReference>
<dbReference type="IntAct" id="Q8IXM2">
    <property type="interactions" value="39"/>
</dbReference>
<dbReference type="MINT" id="Q8IXM2"/>
<dbReference type="STRING" id="9606.ENSP00000448598"/>
<dbReference type="GlyCosmos" id="Q8IXM2">
    <property type="glycosylation" value="1 site, 1 glycan"/>
</dbReference>
<dbReference type="GlyGen" id="Q8IXM2">
    <property type="glycosylation" value="1 site, 1 O-linked glycan (1 site)"/>
</dbReference>
<dbReference type="iPTMnet" id="Q8IXM2"/>
<dbReference type="MetOSite" id="Q8IXM2"/>
<dbReference type="PhosphoSitePlus" id="Q8IXM2"/>
<dbReference type="BioMuta" id="C17orf49"/>
<dbReference type="DMDM" id="74759674"/>
<dbReference type="jPOST" id="Q8IXM2"/>
<dbReference type="MassIVE" id="Q8IXM2"/>
<dbReference type="PaxDb" id="9606-ENSP00000448598"/>
<dbReference type="PeptideAtlas" id="Q8IXM2"/>
<dbReference type="ProteomicsDB" id="71027">
    <molecule id="Q8IXM2-1"/>
</dbReference>
<dbReference type="ProteomicsDB" id="71028">
    <molecule id="Q8IXM2-2"/>
</dbReference>
<dbReference type="ProteomicsDB" id="8467"/>
<dbReference type="Pumba" id="Q8IXM2"/>
<dbReference type="TopDownProteomics" id="Q8IXM2-1">
    <molecule id="Q8IXM2-1"/>
</dbReference>
<dbReference type="Antibodypedia" id="61837">
    <property type="antibodies" value="98 antibodies from 19 providers"/>
</dbReference>
<dbReference type="DNASU" id="124944"/>
<dbReference type="Ensembl" id="ENST00000439424.6">
    <molecule id="Q8IXM2-1"/>
    <property type="protein sequence ID" value="ENSP00000411851.2"/>
    <property type="gene ID" value="ENSG00000258315.5"/>
</dbReference>
<dbReference type="Ensembl" id="ENST00000546495.5">
    <molecule id="Q8IXM2-3"/>
    <property type="protein sequence ID" value="ENSP00000448598.1"/>
    <property type="gene ID" value="ENSG00000258315.5"/>
</dbReference>
<dbReference type="Ensembl" id="ENST00000552402.5">
    <molecule id="Q8IXM2-2"/>
    <property type="protein sequence ID" value="ENSP00000448746.1"/>
    <property type="gene ID" value="ENSG00000258315.5"/>
</dbReference>
<dbReference type="GeneID" id="124944"/>
<dbReference type="KEGG" id="hsa:124944"/>
<dbReference type="MANE-Select" id="ENST00000439424.6">
    <property type="protein sequence ID" value="ENSP00000411851.2"/>
    <property type="RefSeq nucleotide sequence ID" value="NM_174893.4"/>
    <property type="RefSeq protein sequence ID" value="NP_777553.1"/>
</dbReference>
<dbReference type="UCSC" id="uc002ged.4">
    <molecule id="Q8IXM2-1"/>
    <property type="organism name" value="human"/>
</dbReference>
<dbReference type="AGR" id="HGNC:28737"/>
<dbReference type="CTD" id="124944"/>
<dbReference type="DisGeNET" id="124944"/>
<dbReference type="GeneCards" id="BACC1"/>
<dbReference type="HGNC" id="HGNC:28737">
    <property type="gene designation" value="BACC1"/>
</dbReference>
<dbReference type="HPA" id="ENSG00000258315">
    <property type="expression patterns" value="Low tissue specificity"/>
</dbReference>
<dbReference type="neXtProt" id="NX_Q8IXM2"/>
<dbReference type="OpenTargets" id="ENSG00000258315"/>
<dbReference type="PharmGKB" id="PA142672232"/>
<dbReference type="VEuPathDB" id="HostDB:ENSG00000258315"/>
<dbReference type="eggNOG" id="KOG4834">
    <property type="taxonomic scope" value="Eukaryota"/>
</dbReference>
<dbReference type="GeneTree" id="ENSGT00390000014721"/>
<dbReference type="HOGENOM" id="CLU_104449_0_0_1"/>
<dbReference type="InParanoid" id="Q8IXM2"/>
<dbReference type="OMA" id="GKWADED"/>
<dbReference type="OrthoDB" id="10021571at2759"/>
<dbReference type="PAN-GO" id="Q8IXM2">
    <property type="GO annotations" value="2 GO annotations based on evolutionary models"/>
</dbReference>
<dbReference type="PhylomeDB" id="Q8IXM2"/>
<dbReference type="TreeFam" id="TF324877"/>
<dbReference type="PathwayCommons" id="Q8IXM2"/>
<dbReference type="SignaLink" id="Q8IXM2"/>
<dbReference type="BioGRID-ORCS" id="124944">
    <property type="hits" value="195 hits in 1097 CRISPR screens"/>
</dbReference>
<dbReference type="GenomeRNAi" id="124944"/>
<dbReference type="Pharos" id="Q8IXM2">
    <property type="development level" value="Tbio"/>
</dbReference>
<dbReference type="PRO" id="PR:Q8IXM2"/>
<dbReference type="Proteomes" id="UP000005640">
    <property type="component" value="Chromosome 17"/>
</dbReference>
<dbReference type="RNAct" id="Q8IXM2">
    <property type="molecule type" value="protein"/>
</dbReference>
<dbReference type="Bgee" id="ENSG00000258315">
    <property type="expression patterns" value="Expressed in granulocyte and 99 other cell types or tissues"/>
</dbReference>
<dbReference type="ExpressionAtlas" id="Q8IXM2">
    <property type="expression patterns" value="baseline and differential"/>
</dbReference>
<dbReference type="GO" id="GO:0005829">
    <property type="term" value="C:cytosol"/>
    <property type="evidence" value="ECO:0000314"/>
    <property type="project" value="HPA"/>
</dbReference>
<dbReference type="GO" id="GO:0071339">
    <property type="term" value="C:MLL1 complex"/>
    <property type="evidence" value="ECO:0000314"/>
    <property type="project" value="UniProtKB"/>
</dbReference>
<dbReference type="GO" id="GO:0005654">
    <property type="term" value="C:nucleoplasm"/>
    <property type="evidence" value="ECO:0000314"/>
    <property type="project" value="HPA"/>
</dbReference>
<dbReference type="GO" id="GO:0016589">
    <property type="term" value="C:NURF complex"/>
    <property type="evidence" value="ECO:0000314"/>
    <property type="project" value="UniProtKB"/>
</dbReference>
<dbReference type="GO" id="GO:0003677">
    <property type="term" value="F:DNA binding"/>
    <property type="evidence" value="ECO:0007669"/>
    <property type="project" value="UniProtKB-KW"/>
</dbReference>
<dbReference type="GO" id="GO:0042802">
    <property type="term" value="F:identical protein binding"/>
    <property type="evidence" value="ECO:0000353"/>
    <property type="project" value="IntAct"/>
</dbReference>
<dbReference type="GO" id="GO:0006325">
    <property type="term" value="P:chromatin organization"/>
    <property type="evidence" value="ECO:0007669"/>
    <property type="project" value="UniProtKB-KW"/>
</dbReference>
<dbReference type="CDD" id="cd00167">
    <property type="entry name" value="SANT"/>
    <property type="match status" value="1"/>
</dbReference>
<dbReference type="FunFam" id="1.20.58.1880:FF:000003">
    <property type="entry name" value="chromatin complexes subunit BAP18 isoform X1"/>
    <property type="match status" value="1"/>
</dbReference>
<dbReference type="Gene3D" id="1.20.58.1880">
    <property type="match status" value="1"/>
</dbReference>
<dbReference type="InterPro" id="IPR009057">
    <property type="entry name" value="Homeodomain-like_sf"/>
</dbReference>
<dbReference type="InterPro" id="IPR001005">
    <property type="entry name" value="SANT/Myb"/>
</dbReference>
<dbReference type="PANTHER" id="PTHR21397:SF2">
    <property type="entry name" value="CHROMATIN COMPLEXES SUBUNIT BAP18"/>
    <property type="match status" value="1"/>
</dbReference>
<dbReference type="PANTHER" id="PTHR21397">
    <property type="entry name" value="CHROMATIN COMPLEXES SUBUNIT BAP18-RELATED"/>
    <property type="match status" value="1"/>
</dbReference>
<dbReference type="SUPFAM" id="SSF46689">
    <property type="entry name" value="Homeodomain-like"/>
    <property type="match status" value="1"/>
</dbReference>
<name>BAP18_HUMAN</name>
<accession>Q8IXM2</accession>
<accession>B4DIV3</accession>
<accession>C9J4G0</accession>
<accession>E9PB29</accession>
<organism>
    <name type="scientific">Homo sapiens</name>
    <name type="common">Human</name>
    <dbReference type="NCBI Taxonomy" id="9606"/>
    <lineage>
        <taxon>Eukaryota</taxon>
        <taxon>Metazoa</taxon>
        <taxon>Chordata</taxon>
        <taxon>Craniata</taxon>
        <taxon>Vertebrata</taxon>
        <taxon>Euteleostomi</taxon>
        <taxon>Mammalia</taxon>
        <taxon>Eutheria</taxon>
        <taxon>Euarchontoglires</taxon>
        <taxon>Primates</taxon>
        <taxon>Haplorrhini</taxon>
        <taxon>Catarrhini</taxon>
        <taxon>Hominidae</taxon>
        <taxon>Homo</taxon>
    </lineage>
</organism>
<gene>
    <name evidence="7" type="primary">BACC1</name>
    <name type="synonym">BAP18</name>
    <name type="synonym">C17orf49</name>
</gene>